<feature type="chain" id="PRO_0000245689" description="NAD(P)H-quinone oxidoreductase subunit I">
    <location>
        <begin position="1"/>
        <end position="210"/>
    </location>
</feature>
<feature type="domain" description="4Fe-4S ferredoxin-type 1" evidence="1">
    <location>
        <begin position="54"/>
        <end position="83"/>
    </location>
</feature>
<feature type="domain" description="4Fe-4S ferredoxin-type 2" evidence="1">
    <location>
        <begin position="94"/>
        <end position="123"/>
    </location>
</feature>
<feature type="binding site" evidence="1">
    <location>
        <position position="63"/>
    </location>
    <ligand>
        <name>[4Fe-4S] cluster</name>
        <dbReference type="ChEBI" id="CHEBI:49883"/>
        <label>1</label>
    </ligand>
</feature>
<feature type="binding site" evidence="1">
    <location>
        <position position="66"/>
    </location>
    <ligand>
        <name>[4Fe-4S] cluster</name>
        <dbReference type="ChEBI" id="CHEBI:49883"/>
        <label>1</label>
    </ligand>
</feature>
<feature type="binding site" evidence="1">
    <location>
        <position position="69"/>
    </location>
    <ligand>
        <name>[4Fe-4S] cluster</name>
        <dbReference type="ChEBI" id="CHEBI:49883"/>
        <label>1</label>
    </ligand>
</feature>
<feature type="binding site" evidence="1">
    <location>
        <position position="73"/>
    </location>
    <ligand>
        <name>[4Fe-4S] cluster</name>
        <dbReference type="ChEBI" id="CHEBI:49883"/>
        <label>2</label>
    </ligand>
</feature>
<feature type="binding site" evidence="1">
    <location>
        <position position="103"/>
    </location>
    <ligand>
        <name>[4Fe-4S] cluster</name>
        <dbReference type="ChEBI" id="CHEBI:49883"/>
        <label>2</label>
    </ligand>
</feature>
<feature type="binding site" evidence="1">
    <location>
        <position position="106"/>
    </location>
    <ligand>
        <name>[4Fe-4S] cluster</name>
        <dbReference type="ChEBI" id="CHEBI:49883"/>
        <label>2</label>
    </ligand>
</feature>
<feature type="binding site" evidence="1">
    <location>
        <position position="109"/>
    </location>
    <ligand>
        <name>[4Fe-4S] cluster</name>
        <dbReference type="ChEBI" id="CHEBI:49883"/>
        <label>2</label>
    </ligand>
</feature>
<feature type="binding site" evidence="1">
    <location>
        <position position="113"/>
    </location>
    <ligand>
        <name>[4Fe-4S] cluster</name>
        <dbReference type="ChEBI" id="CHEBI:49883"/>
        <label>1</label>
    </ligand>
</feature>
<gene>
    <name evidence="1" type="primary">ndhI</name>
    <name type="ordered locus">CYB_0869</name>
</gene>
<proteinExistence type="inferred from homology"/>
<name>NDHI_SYNJB</name>
<comment type="function">
    <text evidence="1">NDH-1 shuttles electrons from an unknown electron donor, via FMN and iron-sulfur (Fe-S) centers, to quinones in the respiratory and/or the photosynthetic chain. The immediate electron acceptor for the enzyme in this species is believed to be plastoquinone. Couples the redox reaction to proton translocation, and thus conserves the redox energy in a proton gradient.</text>
</comment>
<comment type="catalytic activity">
    <reaction evidence="1">
        <text>a plastoquinone + NADH + (n+1) H(+)(in) = a plastoquinol + NAD(+) + n H(+)(out)</text>
        <dbReference type="Rhea" id="RHEA:42608"/>
        <dbReference type="Rhea" id="RHEA-COMP:9561"/>
        <dbReference type="Rhea" id="RHEA-COMP:9562"/>
        <dbReference type="ChEBI" id="CHEBI:15378"/>
        <dbReference type="ChEBI" id="CHEBI:17757"/>
        <dbReference type="ChEBI" id="CHEBI:57540"/>
        <dbReference type="ChEBI" id="CHEBI:57945"/>
        <dbReference type="ChEBI" id="CHEBI:62192"/>
    </reaction>
</comment>
<comment type="catalytic activity">
    <reaction evidence="1">
        <text>a plastoquinone + NADPH + (n+1) H(+)(in) = a plastoquinol + NADP(+) + n H(+)(out)</text>
        <dbReference type="Rhea" id="RHEA:42612"/>
        <dbReference type="Rhea" id="RHEA-COMP:9561"/>
        <dbReference type="Rhea" id="RHEA-COMP:9562"/>
        <dbReference type="ChEBI" id="CHEBI:15378"/>
        <dbReference type="ChEBI" id="CHEBI:17757"/>
        <dbReference type="ChEBI" id="CHEBI:57783"/>
        <dbReference type="ChEBI" id="CHEBI:58349"/>
        <dbReference type="ChEBI" id="CHEBI:62192"/>
    </reaction>
</comment>
<comment type="cofactor">
    <cofactor evidence="1">
        <name>[4Fe-4S] cluster</name>
        <dbReference type="ChEBI" id="CHEBI:49883"/>
    </cofactor>
    <text evidence="1">Binds 2 [4Fe-4S] clusters per subunit.</text>
</comment>
<comment type="subunit">
    <text evidence="1">NDH-1 is composed of at least 11 different subunits.</text>
</comment>
<comment type="subcellular location">
    <subcellularLocation>
        <location evidence="1">Cellular thylakoid membrane</location>
        <topology evidence="1">Peripheral membrane protein</topology>
    </subcellularLocation>
</comment>
<comment type="similarity">
    <text evidence="1">Belongs to the complex I 23 kDa subunit family.</text>
</comment>
<organism>
    <name type="scientific">Synechococcus sp. (strain JA-2-3B'a(2-13))</name>
    <name type="common">Cyanobacteria bacterium Yellowstone B-Prime</name>
    <dbReference type="NCBI Taxonomy" id="321332"/>
    <lineage>
        <taxon>Bacteria</taxon>
        <taxon>Bacillati</taxon>
        <taxon>Cyanobacteriota</taxon>
        <taxon>Cyanophyceae</taxon>
        <taxon>Synechococcales</taxon>
        <taxon>Synechococcaceae</taxon>
        <taxon>Synechococcus</taxon>
    </lineage>
</organism>
<protein>
    <recommendedName>
        <fullName evidence="1">NAD(P)H-quinone oxidoreductase subunit I</fullName>
        <ecNumber evidence="1">7.1.1.-</ecNumber>
    </recommendedName>
    <alternativeName>
        <fullName evidence="1">NAD(P)H dehydrogenase I subunit I</fullName>
    </alternativeName>
    <alternativeName>
        <fullName evidence="1">NDH-1 subunit I</fullName>
        <shortName evidence="1">NDH-I</shortName>
    </alternativeName>
</protein>
<accession>Q2JHK4</accession>
<dbReference type="EC" id="7.1.1.-" evidence="1"/>
<dbReference type="EMBL" id="CP000240">
    <property type="protein sequence ID" value="ABD01849.1"/>
    <property type="molecule type" value="Genomic_DNA"/>
</dbReference>
<dbReference type="RefSeq" id="WP_011432505.1">
    <property type="nucleotide sequence ID" value="NC_007776.1"/>
</dbReference>
<dbReference type="SMR" id="Q2JHK4"/>
<dbReference type="STRING" id="321332.CYB_0869"/>
<dbReference type="KEGG" id="cyb:CYB_0869"/>
<dbReference type="eggNOG" id="COG1143">
    <property type="taxonomic scope" value="Bacteria"/>
</dbReference>
<dbReference type="HOGENOM" id="CLU_122804_0_0_3"/>
<dbReference type="OrthoDB" id="9798098at2"/>
<dbReference type="Proteomes" id="UP000001938">
    <property type="component" value="Chromosome"/>
</dbReference>
<dbReference type="GO" id="GO:0031676">
    <property type="term" value="C:plasma membrane-derived thylakoid membrane"/>
    <property type="evidence" value="ECO:0007669"/>
    <property type="project" value="UniProtKB-SubCell"/>
</dbReference>
<dbReference type="GO" id="GO:0051539">
    <property type="term" value="F:4 iron, 4 sulfur cluster binding"/>
    <property type="evidence" value="ECO:0007669"/>
    <property type="project" value="UniProtKB-KW"/>
</dbReference>
<dbReference type="GO" id="GO:0005506">
    <property type="term" value="F:iron ion binding"/>
    <property type="evidence" value="ECO:0007669"/>
    <property type="project" value="UniProtKB-UniRule"/>
</dbReference>
<dbReference type="GO" id="GO:0008137">
    <property type="term" value="F:NADH dehydrogenase (ubiquinone) activity"/>
    <property type="evidence" value="ECO:0007669"/>
    <property type="project" value="InterPro"/>
</dbReference>
<dbReference type="GO" id="GO:0048038">
    <property type="term" value="F:quinone binding"/>
    <property type="evidence" value="ECO:0007669"/>
    <property type="project" value="UniProtKB-KW"/>
</dbReference>
<dbReference type="GO" id="GO:0019684">
    <property type="term" value="P:photosynthesis, light reaction"/>
    <property type="evidence" value="ECO:0007669"/>
    <property type="project" value="UniProtKB-UniRule"/>
</dbReference>
<dbReference type="Gene3D" id="3.30.70.3270">
    <property type="match status" value="1"/>
</dbReference>
<dbReference type="HAMAP" id="MF_01351">
    <property type="entry name" value="NDH1_NuoI"/>
    <property type="match status" value="1"/>
</dbReference>
<dbReference type="InterPro" id="IPR017896">
    <property type="entry name" value="4Fe4S_Fe-S-bd"/>
</dbReference>
<dbReference type="InterPro" id="IPR017900">
    <property type="entry name" value="4Fe4S_Fe_S_CS"/>
</dbReference>
<dbReference type="InterPro" id="IPR010226">
    <property type="entry name" value="NADH_quinone_OxRdtase_chainI"/>
</dbReference>
<dbReference type="InterPro" id="IPR004497">
    <property type="entry name" value="NDHI"/>
</dbReference>
<dbReference type="NCBIfam" id="TIGR00403">
    <property type="entry name" value="ndhI"/>
    <property type="match status" value="1"/>
</dbReference>
<dbReference type="NCBIfam" id="TIGR01971">
    <property type="entry name" value="NuoI"/>
    <property type="match status" value="1"/>
</dbReference>
<dbReference type="NCBIfam" id="NF004537">
    <property type="entry name" value="PRK05888.1-3"/>
    <property type="match status" value="1"/>
</dbReference>
<dbReference type="PANTHER" id="PTHR47275">
    <property type="entry name" value="NAD(P)H-QUINONE OXIDOREDUCTASE SUBUNIT I, CHLOROPLASTIC"/>
    <property type="match status" value="1"/>
</dbReference>
<dbReference type="PANTHER" id="PTHR47275:SF1">
    <property type="entry name" value="NAD(P)H-QUINONE OXIDOREDUCTASE SUBUNIT I, CHLOROPLASTIC"/>
    <property type="match status" value="1"/>
</dbReference>
<dbReference type="Pfam" id="PF12838">
    <property type="entry name" value="Fer4_7"/>
    <property type="match status" value="1"/>
</dbReference>
<dbReference type="SUPFAM" id="SSF54862">
    <property type="entry name" value="4Fe-4S ferredoxins"/>
    <property type="match status" value="1"/>
</dbReference>
<dbReference type="PROSITE" id="PS00198">
    <property type="entry name" value="4FE4S_FER_1"/>
    <property type="match status" value="2"/>
</dbReference>
<dbReference type="PROSITE" id="PS51379">
    <property type="entry name" value="4FE4S_FER_2"/>
    <property type="match status" value="2"/>
</dbReference>
<reference key="1">
    <citation type="journal article" date="2007" name="ISME J.">
        <title>Population level functional diversity in a microbial community revealed by comparative genomic and metagenomic analyses.</title>
        <authorList>
            <person name="Bhaya D."/>
            <person name="Grossman A.R."/>
            <person name="Steunou A.-S."/>
            <person name="Khuri N."/>
            <person name="Cohan F.M."/>
            <person name="Hamamura N."/>
            <person name="Melendrez M.C."/>
            <person name="Bateson M.M."/>
            <person name="Ward D.M."/>
            <person name="Heidelberg J.F."/>
        </authorList>
    </citation>
    <scope>NUCLEOTIDE SEQUENCE [LARGE SCALE GENOMIC DNA]</scope>
    <source>
        <strain>JA-2-3B'a(2-13)</strain>
    </source>
</reference>
<sequence length="210" mass="23780">MTFLKRVKEYVGDAFRAAKYIGQGMGVVFDHMGRRPVTVQYPFEKLIPSERFRGRIHFEFDKCIACEICVRVCPIDLPVVDWAYNPELKKKELYSYSIDFGVCIFCANCVEFCPTNCLSVTEDYELATYDRHDLNYHQVAMGRLPSKVTEDPMVTPLREFAYLPKGVIDPHDLPAGSQRAGKRPEEILAEMRAAKAAKEAEAKAAKAAAE</sequence>
<evidence type="ECO:0000255" key="1">
    <source>
        <dbReference type="HAMAP-Rule" id="MF_01351"/>
    </source>
</evidence>
<keyword id="KW-0004">4Fe-4S</keyword>
<keyword id="KW-0408">Iron</keyword>
<keyword id="KW-0411">Iron-sulfur</keyword>
<keyword id="KW-0472">Membrane</keyword>
<keyword id="KW-0479">Metal-binding</keyword>
<keyword id="KW-0520">NAD</keyword>
<keyword id="KW-0521">NADP</keyword>
<keyword id="KW-0618">Plastoquinone</keyword>
<keyword id="KW-0874">Quinone</keyword>
<keyword id="KW-1185">Reference proteome</keyword>
<keyword id="KW-0677">Repeat</keyword>
<keyword id="KW-0793">Thylakoid</keyword>
<keyword id="KW-1278">Translocase</keyword>